<name>RS14_HYDCU</name>
<comment type="function">
    <text evidence="1">Binds 16S rRNA, required for the assembly of 30S particles and may also be responsible for determining the conformation of the 16S rRNA at the A site.</text>
</comment>
<comment type="subunit">
    <text evidence="1">Part of the 30S ribosomal subunit. Contacts proteins S3 and S10.</text>
</comment>
<comment type="similarity">
    <text evidence="1">Belongs to the universal ribosomal protein uS14 family.</text>
</comment>
<reference key="1">
    <citation type="journal article" date="2006" name="PLoS Biol.">
        <title>The genome of deep-sea vent chemolithoautotroph Thiomicrospira crunogena XCL-2.</title>
        <authorList>
            <person name="Scott K.M."/>
            <person name="Sievert S.M."/>
            <person name="Abril F.N."/>
            <person name="Ball L.A."/>
            <person name="Barrett C.J."/>
            <person name="Blake R.A."/>
            <person name="Boller A.J."/>
            <person name="Chain P.S.G."/>
            <person name="Clark J.A."/>
            <person name="Davis C.R."/>
            <person name="Detter C."/>
            <person name="Do K.F."/>
            <person name="Dobrinski K.P."/>
            <person name="Faza B.I."/>
            <person name="Fitzpatrick K.A."/>
            <person name="Freyermuth S.K."/>
            <person name="Harmer T.L."/>
            <person name="Hauser L.J."/>
            <person name="Huegler M."/>
            <person name="Kerfeld C.A."/>
            <person name="Klotz M.G."/>
            <person name="Kong W.W."/>
            <person name="Land M."/>
            <person name="Lapidus A."/>
            <person name="Larimer F.W."/>
            <person name="Longo D.L."/>
            <person name="Lucas S."/>
            <person name="Malfatti S.A."/>
            <person name="Massey S.E."/>
            <person name="Martin D.D."/>
            <person name="McCuddin Z."/>
            <person name="Meyer F."/>
            <person name="Moore J.L."/>
            <person name="Ocampo L.H. Jr."/>
            <person name="Paul J.H."/>
            <person name="Paulsen I.T."/>
            <person name="Reep D.K."/>
            <person name="Ren Q."/>
            <person name="Ross R.L."/>
            <person name="Sato P.Y."/>
            <person name="Thomas P."/>
            <person name="Tinkham L.E."/>
            <person name="Zeruth G.T."/>
        </authorList>
    </citation>
    <scope>NUCLEOTIDE SEQUENCE [LARGE SCALE GENOMIC DNA]</scope>
    <source>
        <strain>DSM 25203 / XCL-2</strain>
    </source>
</reference>
<accession>Q31IW9</accession>
<dbReference type="EMBL" id="CP000109">
    <property type="protein sequence ID" value="ABB40904.1"/>
    <property type="molecule type" value="Genomic_DNA"/>
</dbReference>
<dbReference type="SMR" id="Q31IW9"/>
<dbReference type="STRING" id="317025.Tcr_0308"/>
<dbReference type="KEGG" id="tcx:Tcr_0308"/>
<dbReference type="eggNOG" id="COG0199">
    <property type="taxonomic scope" value="Bacteria"/>
</dbReference>
<dbReference type="HOGENOM" id="CLU_139869_0_1_6"/>
<dbReference type="OrthoDB" id="9810484at2"/>
<dbReference type="GO" id="GO:0005737">
    <property type="term" value="C:cytoplasm"/>
    <property type="evidence" value="ECO:0007669"/>
    <property type="project" value="UniProtKB-ARBA"/>
</dbReference>
<dbReference type="GO" id="GO:0015935">
    <property type="term" value="C:small ribosomal subunit"/>
    <property type="evidence" value="ECO:0007669"/>
    <property type="project" value="TreeGrafter"/>
</dbReference>
<dbReference type="GO" id="GO:0019843">
    <property type="term" value="F:rRNA binding"/>
    <property type="evidence" value="ECO:0007669"/>
    <property type="project" value="UniProtKB-UniRule"/>
</dbReference>
<dbReference type="GO" id="GO:0003735">
    <property type="term" value="F:structural constituent of ribosome"/>
    <property type="evidence" value="ECO:0007669"/>
    <property type="project" value="InterPro"/>
</dbReference>
<dbReference type="GO" id="GO:0006412">
    <property type="term" value="P:translation"/>
    <property type="evidence" value="ECO:0007669"/>
    <property type="project" value="UniProtKB-UniRule"/>
</dbReference>
<dbReference type="FunFam" id="1.10.287.1480:FF:000001">
    <property type="entry name" value="30S ribosomal protein S14"/>
    <property type="match status" value="1"/>
</dbReference>
<dbReference type="Gene3D" id="1.10.287.1480">
    <property type="match status" value="1"/>
</dbReference>
<dbReference type="HAMAP" id="MF_00537">
    <property type="entry name" value="Ribosomal_uS14_1"/>
    <property type="match status" value="1"/>
</dbReference>
<dbReference type="InterPro" id="IPR001209">
    <property type="entry name" value="Ribosomal_uS14"/>
</dbReference>
<dbReference type="InterPro" id="IPR023036">
    <property type="entry name" value="Ribosomal_uS14_bac/plastid"/>
</dbReference>
<dbReference type="InterPro" id="IPR018271">
    <property type="entry name" value="Ribosomal_uS14_CS"/>
</dbReference>
<dbReference type="NCBIfam" id="NF006477">
    <property type="entry name" value="PRK08881.1"/>
    <property type="match status" value="1"/>
</dbReference>
<dbReference type="PANTHER" id="PTHR19836">
    <property type="entry name" value="30S RIBOSOMAL PROTEIN S14"/>
    <property type="match status" value="1"/>
</dbReference>
<dbReference type="PANTHER" id="PTHR19836:SF19">
    <property type="entry name" value="SMALL RIBOSOMAL SUBUNIT PROTEIN US14M"/>
    <property type="match status" value="1"/>
</dbReference>
<dbReference type="Pfam" id="PF00253">
    <property type="entry name" value="Ribosomal_S14"/>
    <property type="match status" value="1"/>
</dbReference>
<dbReference type="SUPFAM" id="SSF57716">
    <property type="entry name" value="Glucocorticoid receptor-like (DNA-binding domain)"/>
    <property type="match status" value="1"/>
</dbReference>
<dbReference type="PROSITE" id="PS00527">
    <property type="entry name" value="RIBOSOMAL_S14"/>
    <property type="match status" value="1"/>
</dbReference>
<proteinExistence type="inferred from homology"/>
<sequence length="101" mass="11667">MAKQSMIEREKKRAKMVAKYSAKRAELKKASVDMSLSFEERMEAMDKLAKLPRNASPVRQQNRCRLTGRPHGVYRKFGLSRNMLRQLAMQGDVPGLRKASW</sequence>
<protein>
    <recommendedName>
        <fullName evidence="1">Small ribosomal subunit protein uS14</fullName>
    </recommendedName>
    <alternativeName>
        <fullName evidence="2">30S ribosomal protein S14</fullName>
    </alternativeName>
</protein>
<feature type="chain" id="PRO_1000128621" description="Small ribosomal subunit protein uS14">
    <location>
        <begin position="1"/>
        <end position="101"/>
    </location>
</feature>
<keyword id="KW-0687">Ribonucleoprotein</keyword>
<keyword id="KW-0689">Ribosomal protein</keyword>
<keyword id="KW-0694">RNA-binding</keyword>
<keyword id="KW-0699">rRNA-binding</keyword>
<evidence type="ECO:0000255" key="1">
    <source>
        <dbReference type="HAMAP-Rule" id="MF_00537"/>
    </source>
</evidence>
<evidence type="ECO:0000305" key="2"/>
<gene>
    <name evidence="1" type="primary">rpsN</name>
    <name type="ordered locus">Tcr_0308</name>
</gene>
<organism>
    <name type="scientific">Hydrogenovibrio crunogenus (strain DSM 25203 / XCL-2)</name>
    <name type="common">Thiomicrospira crunogena</name>
    <dbReference type="NCBI Taxonomy" id="317025"/>
    <lineage>
        <taxon>Bacteria</taxon>
        <taxon>Pseudomonadati</taxon>
        <taxon>Pseudomonadota</taxon>
        <taxon>Gammaproteobacteria</taxon>
        <taxon>Thiotrichales</taxon>
        <taxon>Piscirickettsiaceae</taxon>
        <taxon>Hydrogenovibrio</taxon>
    </lineage>
</organism>